<dbReference type="EMBL" id="AAAB01008984">
    <property type="protein sequence ID" value="EAA14804.3"/>
    <property type="molecule type" value="Genomic_DNA"/>
</dbReference>
<dbReference type="RefSeq" id="XP_319772.3">
    <property type="nucleotide sequence ID" value="XM_319772.3"/>
</dbReference>
<dbReference type="SMR" id="Q7PWB8"/>
<dbReference type="FunCoup" id="Q7PWB8">
    <property type="interactions" value="543"/>
</dbReference>
<dbReference type="STRING" id="7165.Q7PWB8"/>
<dbReference type="PaxDb" id="7165-AGAP009023-PA"/>
<dbReference type="EnsemblMetazoa" id="AGAP009023-RA">
    <property type="protein sequence ID" value="AGAP009023-PA"/>
    <property type="gene ID" value="AGAP009023"/>
</dbReference>
<dbReference type="GeneID" id="1279980"/>
<dbReference type="KEGG" id="aga:1279980"/>
<dbReference type="VEuPathDB" id="VectorBase:AGAMI1_006902"/>
<dbReference type="VEuPathDB" id="VectorBase:AGAP009023"/>
<dbReference type="eggNOG" id="KOG2439">
    <property type="taxonomic scope" value="Eukaryota"/>
</dbReference>
<dbReference type="HOGENOM" id="CLU_018240_0_0_1"/>
<dbReference type="InParanoid" id="Q7PWB8"/>
<dbReference type="OMA" id="GYLHHVL"/>
<dbReference type="PhylomeDB" id="Q7PWB8"/>
<dbReference type="Proteomes" id="UP000007062">
    <property type="component" value="Chromosome 3R"/>
</dbReference>
<dbReference type="GO" id="GO:0097361">
    <property type="term" value="C:cytosolic [4Fe-4S] assembly targeting complex"/>
    <property type="evidence" value="ECO:0000318"/>
    <property type="project" value="GO_Central"/>
</dbReference>
<dbReference type="GO" id="GO:0051539">
    <property type="term" value="F:4 iron, 4 sulfur cluster binding"/>
    <property type="evidence" value="ECO:0007669"/>
    <property type="project" value="UniProtKB-KW"/>
</dbReference>
<dbReference type="GO" id="GO:0046872">
    <property type="term" value="F:metal ion binding"/>
    <property type="evidence" value="ECO:0007669"/>
    <property type="project" value="UniProtKB-KW"/>
</dbReference>
<dbReference type="GO" id="GO:0016226">
    <property type="term" value="P:iron-sulfur cluster assembly"/>
    <property type="evidence" value="ECO:0000250"/>
    <property type="project" value="UniProtKB"/>
</dbReference>
<dbReference type="Gene3D" id="3.40.50.1780">
    <property type="match status" value="1"/>
</dbReference>
<dbReference type="Gene3D" id="3.40.950.10">
    <property type="entry name" value="Fe-only Hydrogenase (Larger Subunit), Chain L, domain 3"/>
    <property type="match status" value="1"/>
</dbReference>
<dbReference type="InterPro" id="IPR050340">
    <property type="entry name" value="Cytosolic_Fe-S_CAF"/>
</dbReference>
<dbReference type="InterPro" id="IPR009016">
    <property type="entry name" value="Fe_hydrogenase"/>
</dbReference>
<dbReference type="InterPro" id="IPR004108">
    <property type="entry name" value="Fe_hydrogenase_lsu_C"/>
</dbReference>
<dbReference type="InterPro" id="IPR003149">
    <property type="entry name" value="Fe_hydrogenase_ssu"/>
</dbReference>
<dbReference type="PANTHER" id="PTHR11615">
    <property type="entry name" value="NITRATE, FORMATE, IRON DEHYDROGENASE"/>
    <property type="match status" value="1"/>
</dbReference>
<dbReference type="Pfam" id="PF02906">
    <property type="entry name" value="Fe_hyd_lg_C"/>
    <property type="match status" value="1"/>
</dbReference>
<dbReference type="SMART" id="SM00902">
    <property type="entry name" value="Fe_hyd_SSU"/>
    <property type="match status" value="1"/>
</dbReference>
<dbReference type="SUPFAM" id="SSF53920">
    <property type="entry name" value="Fe-only hydrogenase"/>
    <property type="match status" value="1"/>
</dbReference>
<keyword id="KW-0004">4Fe-4S</keyword>
<keyword id="KW-0408">Iron</keyword>
<keyword id="KW-0411">Iron-sulfur</keyword>
<keyword id="KW-0479">Metal-binding</keyword>
<keyword id="KW-1185">Reference proteome</keyword>
<name>NARF_ANOGA</name>
<accession>Q7PWB8</accession>
<organism>
    <name type="scientific">Anopheles gambiae</name>
    <name type="common">African malaria mosquito</name>
    <dbReference type="NCBI Taxonomy" id="7165"/>
    <lineage>
        <taxon>Eukaryota</taxon>
        <taxon>Metazoa</taxon>
        <taxon>Ecdysozoa</taxon>
        <taxon>Arthropoda</taxon>
        <taxon>Hexapoda</taxon>
        <taxon>Insecta</taxon>
        <taxon>Pterygota</taxon>
        <taxon>Neoptera</taxon>
        <taxon>Endopterygota</taxon>
        <taxon>Diptera</taxon>
        <taxon>Nematocera</taxon>
        <taxon>Culicoidea</taxon>
        <taxon>Culicidae</taxon>
        <taxon>Anophelinae</taxon>
        <taxon>Anopheles</taxon>
    </lineage>
</organism>
<evidence type="ECO:0000250" key="1"/>
<evidence type="ECO:0000255" key="2"/>
<evidence type="ECO:0000305" key="3"/>
<comment type="function">
    <text evidence="1">Component of the cytosolic iron-sulfur (Fe/S) protein assembly machinery. Required for maturation of extramitochondrial Fe/S proteins (By similarity).</text>
</comment>
<comment type="similarity">
    <text evidence="3">Belongs to the NARF family.</text>
</comment>
<proteinExistence type="inferred from homology"/>
<sequence>MSRFSSALQLTDLDDFITPSQECIKPVKIETSKSKTGAKITIQEDGSYVQESSSGIQKLEKVEITLADCLACSGCITSAEGVLISQQSQEELLRVMNANNLAKLNNQRDEIKFVVFTVSQQPILSLARKYNLTPEDTFEHIAGYFKKLGADMVVDTKIADDLALIECRNEFIERYNTNRKLLPMLASSCPGWVCYAEKTHGNFILPYIATTRSPQQIMGVLVKQYLAKQLQTTGDRIYHVTVMPCYDKKLEASREDFFSEVENSRDVDCVITSIEIEQMLNSLDLPSLQLVERCAIDWPWPTVRPSAFVWGHESSGSGGYAEYIFKYAARKLFNVQLDTVAFKPLRNNDMREAVLEQNGQVLMRFAIANGFRNIQNMVQKLKRGKSTYDYVEIMACPSGCLNGGAQIRPEEGRAARELTAELECMYRSLPQSTPENDCVQTMYATFFDSEGDLNKRQSLLHTSYHQIEKINSALNIKW</sequence>
<reference key="1">
    <citation type="journal article" date="2002" name="Science">
        <title>The genome sequence of the malaria mosquito Anopheles gambiae.</title>
        <authorList>
            <person name="Holt R.A."/>
            <person name="Subramanian G.M."/>
            <person name="Halpern A."/>
            <person name="Sutton G.G."/>
            <person name="Charlab R."/>
            <person name="Nusskern D.R."/>
            <person name="Wincker P."/>
            <person name="Clark A.G."/>
            <person name="Ribeiro J.M.C."/>
            <person name="Wides R."/>
            <person name="Salzberg S.L."/>
            <person name="Loftus B.J."/>
            <person name="Yandell M.D."/>
            <person name="Majoros W.H."/>
            <person name="Rusch D.B."/>
            <person name="Lai Z."/>
            <person name="Kraft C.L."/>
            <person name="Abril J.F."/>
            <person name="Anthouard V."/>
            <person name="Arensburger P."/>
            <person name="Atkinson P.W."/>
            <person name="Baden H."/>
            <person name="de Berardinis V."/>
            <person name="Baldwin D."/>
            <person name="Benes V."/>
            <person name="Biedler J."/>
            <person name="Blass C."/>
            <person name="Bolanos R."/>
            <person name="Boscus D."/>
            <person name="Barnstead M."/>
            <person name="Cai S."/>
            <person name="Center A."/>
            <person name="Chaturverdi K."/>
            <person name="Christophides G.K."/>
            <person name="Chrystal M.A.M."/>
            <person name="Clamp M."/>
            <person name="Cravchik A."/>
            <person name="Curwen V."/>
            <person name="Dana A."/>
            <person name="Delcher A."/>
            <person name="Dew I."/>
            <person name="Evans C.A."/>
            <person name="Flanigan M."/>
            <person name="Grundschober-Freimoser A."/>
            <person name="Friedli L."/>
            <person name="Gu Z."/>
            <person name="Guan P."/>
            <person name="Guigo R."/>
            <person name="Hillenmeyer M.E."/>
            <person name="Hladun S.L."/>
            <person name="Hogan J.R."/>
            <person name="Hong Y.S."/>
            <person name="Hoover J."/>
            <person name="Jaillon O."/>
            <person name="Ke Z."/>
            <person name="Kodira C.D."/>
            <person name="Kokoza E."/>
            <person name="Koutsos A."/>
            <person name="Letunic I."/>
            <person name="Levitsky A.A."/>
            <person name="Liang Y."/>
            <person name="Lin J.-J."/>
            <person name="Lobo N.F."/>
            <person name="Lopez J.R."/>
            <person name="Malek J.A."/>
            <person name="McIntosh T.C."/>
            <person name="Meister S."/>
            <person name="Miller J.R."/>
            <person name="Mobarry C."/>
            <person name="Mongin E."/>
            <person name="Murphy S.D."/>
            <person name="O'Brochta D.A."/>
            <person name="Pfannkoch C."/>
            <person name="Qi R."/>
            <person name="Regier M.A."/>
            <person name="Remington K."/>
            <person name="Shao H."/>
            <person name="Sharakhova M.V."/>
            <person name="Sitter C.D."/>
            <person name="Shetty J."/>
            <person name="Smith T.J."/>
            <person name="Strong R."/>
            <person name="Sun J."/>
            <person name="Thomasova D."/>
            <person name="Ton L.Q."/>
            <person name="Topalis P."/>
            <person name="Tu Z.J."/>
            <person name="Unger M.F."/>
            <person name="Walenz B."/>
            <person name="Wang A.H."/>
            <person name="Wang J."/>
            <person name="Wang M."/>
            <person name="Wang X."/>
            <person name="Woodford K.J."/>
            <person name="Wortman J.R."/>
            <person name="Wu M."/>
            <person name="Yao A."/>
            <person name="Zdobnov E.M."/>
            <person name="Zhang H."/>
            <person name="Zhao Q."/>
            <person name="Zhao S."/>
            <person name="Zhu S.C."/>
            <person name="Zhimulev I."/>
            <person name="Coluzzi M."/>
            <person name="della Torre A."/>
            <person name="Roth C.W."/>
            <person name="Louis C."/>
            <person name="Kalush F."/>
            <person name="Mural R.J."/>
            <person name="Myers E.W."/>
            <person name="Adams M.D."/>
            <person name="Smith H.O."/>
            <person name="Broder S."/>
            <person name="Gardner M.J."/>
            <person name="Fraser C.M."/>
            <person name="Birney E."/>
            <person name="Bork P."/>
            <person name="Brey P.T."/>
            <person name="Venter J.C."/>
            <person name="Weissenbach J."/>
            <person name="Kafatos F.C."/>
            <person name="Collins F.H."/>
            <person name="Hoffman S.L."/>
        </authorList>
    </citation>
    <scope>NUCLEOTIDE SEQUENCE [LARGE SCALE GENOMIC DNA]</scope>
    <source>
        <strain>PEST</strain>
    </source>
</reference>
<protein>
    <recommendedName>
        <fullName>Probable cytosolic Fe-S cluster assembly factor AGAP009023</fullName>
    </recommendedName>
</protein>
<gene>
    <name type="ORF">AGAP009023</name>
</gene>
<feature type="chain" id="PRO_0000383697" description="Probable cytosolic Fe-S cluster assembly factor AGAP009023">
    <location>
        <begin position="1"/>
        <end position="478"/>
    </location>
</feature>
<feature type="binding site" evidence="2">
    <location>
        <position position="23"/>
    </location>
    <ligand>
        <name>[4Fe-4S] cluster</name>
        <dbReference type="ChEBI" id="CHEBI:49883"/>
        <label>1</label>
    </ligand>
</feature>
<feature type="binding site" evidence="2">
    <location>
        <position position="69"/>
    </location>
    <ligand>
        <name>[4Fe-4S] cluster</name>
        <dbReference type="ChEBI" id="CHEBI:49883"/>
        <label>1</label>
    </ligand>
</feature>
<feature type="binding site" evidence="2">
    <location>
        <position position="72"/>
    </location>
    <ligand>
        <name>[4Fe-4S] cluster</name>
        <dbReference type="ChEBI" id="CHEBI:49883"/>
        <label>1</label>
    </ligand>
</feature>
<feature type="binding site" evidence="2">
    <location>
        <position position="75"/>
    </location>
    <ligand>
        <name>[4Fe-4S] cluster</name>
        <dbReference type="ChEBI" id="CHEBI:49883"/>
        <label>1</label>
    </ligand>
</feature>
<feature type="binding site" evidence="2">
    <location>
        <position position="189"/>
    </location>
    <ligand>
        <name>[4Fe-4S] cluster</name>
        <dbReference type="ChEBI" id="CHEBI:49883"/>
        <label>2</label>
    </ligand>
</feature>
<feature type="binding site" evidence="2">
    <location>
        <position position="245"/>
    </location>
    <ligand>
        <name>[4Fe-4S] cluster</name>
        <dbReference type="ChEBI" id="CHEBI:49883"/>
        <label>2</label>
    </ligand>
</feature>
<feature type="binding site" evidence="2">
    <location>
        <position position="396"/>
    </location>
    <ligand>
        <name>[4Fe-4S] cluster</name>
        <dbReference type="ChEBI" id="CHEBI:49883"/>
        <label>2</label>
    </ligand>
</feature>
<feature type="binding site" evidence="2">
    <location>
        <position position="400"/>
    </location>
    <ligand>
        <name>[4Fe-4S] cluster</name>
        <dbReference type="ChEBI" id="CHEBI:49883"/>
        <label>2</label>
    </ligand>
</feature>